<proteinExistence type="inferred from homology"/>
<dbReference type="EMBL" id="CP000730">
    <property type="protein sequence ID" value="ABX30360.1"/>
    <property type="molecule type" value="Genomic_DNA"/>
</dbReference>
<dbReference type="RefSeq" id="WP_000278558.1">
    <property type="nucleotide sequence ID" value="NC_010079.1"/>
</dbReference>
<dbReference type="SMR" id="A8Z577"/>
<dbReference type="KEGG" id="sax:USA300HOU_2369"/>
<dbReference type="HOGENOM" id="CLU_001265_14_0_9"/>
<dbReference type="GO" id="GO:0005886">
    <property type="term" value="C:plasma membrane"/>
    <property type="evidence" value="ECO:0007669"/>
    <property type="project" value="UniProtKB-SubCell"/>
</dbReference>
<dbReference type="GO" id="GO:0015112">
    <property type="term" value="F:nitrate transmembrane transporter activity"/>
    <property type="evidence" value="ECO:0007669"/>
    <property type="project" value="InterPro"/>
</dbReference>
<dbReference type="GO" id="GO:0042128">
    <property type="term" value="P:nitrate assimilation"/>
    <property type="evidence" value="ECO:0007669"/>
    <property type="project" value="UniProtKB-KW"/>
</dbReference>
<dbReference type="CDD" id="cd17341">
    <property type="entry name" value="MFS_NRT2_like"/>
    <property type="match status" value="1"/>
</dbReference>
<dbReference type="Gene3D" id="1.20.1250.20">
    <property type="entry name" value="MFS general substrate transporter like domains"/>
    <property type="match status" value="2"/>
</dbReference>
<dbReference type="InterPro" id="IPR011701">
    <property type="entry name" value="MFS"/>
</dbReference>
<dbReference type="InterPro" id="IPR020846">
    <property type="entry name" value="MFS_dom"/>
</dbReference>
<dbReference type="InterPro" id="IPR036259">
    <property type="entry name" value="MFS_trans_sf"/>
</dbReference>
<dbReference type="InterPro" id="IPR044772">
    <property type="entry name" value="NO3_transporter"/>
</dbReference>
<dbReference type="PANTHER" id="PTHR23515">
    <property type="entry name" value="HIGH-AFFINITY NITRATE TRANSPORTER 2.3"/>
    <property type="match status" value="1"/>
</dbReference>
<dbReference type="Pfam" id="PF07690">
    <property type="entry name" value="MFS_1"/>
    <property type="match status" value="1"/>
</dbReference>
<dbReference type="SUPFAM" id="SSF103473">
    <property type="entry name" value="MFS general substrate transporter"/>
    <property type="match status" value="1"/>
</dbReference>
<dbReference type="PROSITE" id="PS50850">
    <property type="entry name" value="MFS"/>
    <property type="match status" value="1"/>
</dbReference>
<sequence>MYKTKGGFQLTLQTLSLVVGFMAWSIIAPLMPFIKQDVNVTEGQISIILAIPVILGSVLRVPFGYLTNIVGAKWVFFTSFIVLLFPIFFLSQAQTPGMLMASGFFLGVGGAIFSVGVTSVPKYFPKEKVGLANGIYGMGNIGTAVSSFLAPPIAGIIGWQTTVRSYLIIIALFALIMFIFGDTQERKIKVPLMAQMKTLSKNYKLYYLSYWYFITFGAFVAFGIFLPNYLVNHFGIDKVDAGIRSGVFIALATFLRPIGGILGDKFNAVKVLMIDFVVMIIGAIILGISDHIALFTVGCLTISICAGIGNGLIFKLVPSYFLNEAGSANGIVSMMGGLGGFFPPLVITYVANLTGSSHLAFIFLAVFGCIALFTMRHLYQKEYGSLKNG</sequence>
<gene>
    <name type="primary">narT</name>
    <name type="synonym">narK</name>
    <name type="ordered locus">USA300HOU_2369</name>
</gene>
<organism>
    <name type="scientific">Staphylococcus aureus (strain USA300 / TCH1516)</name>
    <dbReference type="NCBI Taxonomy" id="451516"/>
    <lineage>
        <taxon>Bacteria</taxon>
        <taxon>Bacillati</taxon>
        <taxon>Bacillota</taxon>
        <taxon>Bacilli</taxon>
        <taxon>Bacillales</taxon>
        <taxon>Staphylococcaceae</taxon>
        <taxon>Staphylococcus</taxon>
    </lineage>
</organism>
<reference key="1">
    <citation type="journal article" date="2007" name="BMC Microbiol.">
        <title>Subtle genetic changes enhance virulence of methicillin resistant and sensitive Staphylococcus aureus.</title>
        <authorList>
            <person name="Highlander S.K."/>
            <person name="Hulten K.G."/>
            <person name="Qin X."/>
            <person name="Jiang H."/>
            <person name="Yerrapragada S."/>
            <person name="Mason E.O. Jr."/>
            <person name="Shang Y."/>
            <person name="Williams T.M."/>
            <person name="Fortunov R.M."/>
            <person name="Liu Y."/>
            <person name="Igboeli O."/>
            <person name="Petrosino J."/>
            <person name="Tirumalai M."/>
            <person name="Uzman A."/>
            <person name="Fox G.E."/>
            <person name="Cardenas A.M."/>
            <person name="Muzny D.M."/>
            <person name="Hemphill L."/>
            <person name="Ding Y."/>
            <person name="Dugan S."/>
            <person name="Blyth P.R."/>
            <person name="Buhay C.J."/>
            <person name="Dinh H.H."/>
            <person name="Hawes A.C."/>
            <person name="Holder M."/>
            <person name="Kovar C.L."/>
            <person name="Lee S.L."/>
            <person name="Liu W."/>
            <person name="Nazareth L.V."/>
            <person name="Wang Q."/>
            <person name="Zhou J."/>
            <person name="Kaplan S.L."/>
            <person name="Weinstock G.M."/>
        </authorList>
    </citation>
    <scope>NUCLEOTIDE SEQUENCE [LARGE SCALE GENOMIC DNA]</scope>
    <source>
        <strain>USA300 / TCH1516</strain>
    </source>
</reference>
<comment type="function">
    <text evidence="1">Probably required for nitrate uptake under anoxic conditions. Also possibly involved in excretion of nitrite produced by the dissimilatory reduction of nitrate (By similarity).</text>
</comment>
<comment type="subcellular location">
    <subcellularLocation>
        <location evidence="3">Cell membrane</location>
        <topology evidence="3">Multi-pass membrane protein</topology>
    </subcellularLocation>
</comment>
<comment type="induction">
    <text evidence="1">Positively regulated by the two-component system NreB/NreC.</text>
</comment>
<comment type="similarity">
    <text evidence="3">Belongs to the major facilitator superfamily. Nitrate/nitrite porter (TC 2.A.1.8) family.</text>
</comment>
<accession>A8Z577</accession>
<evidence type="ECO:0000250" key="1"/>
<evidence type="ECO:0000255" key="2"/>
<evidence type="ECO:0000305" key="3"/>
<name>NART_STAAT</name>
<keyword id="KW-1003">Cell membrane</keyword>
<keyword id="KW-0472">Membrane</keyword>
<keyword id="KW-0534">Nitrate assimilation</keyword>
<keyword id="KW-0812">Transmembrane</keyword>
<keyword id="KW-1133">Transmembrane helix</keyword>
<keyword id="KW-0813">Transport</keyword>
<protein>
    <recommendedName>
        <fullName>Probable nitrate transporter NarT</fullName>
    </recommendedName>
</protein>
<feature type="chain" id="PRO_0000349398" description="Probable nitrate transporter NarT">
    <location>
        <begin position="1"/>
        <end position="389"/>
    </location>
</feature>
<feature type="transmembrane region" description="Helical" evidence="2">
    <location>
        <begin position="14"/>
        <end position="34"/>
    </location>
</feature>
<feature type="transmembrane region" description="Helical" evidence="2">
    <location>
        <begin position="45"/>
        <end position="65"/>
    </location>
</feature>
<feature type="transmembrane region" description="Helical" evidence="2">
    <location>
        <begin position="69"/>
        <end position="89"/>
    </location>
</feature>
<feature type="transmembrane region" description="Helical" evidence="2">
    <location>
        <begin position="97"/>
        <end position="117"/>
    </location>
</feature>
<feature type="transmembrane region" description="Helical" evidence="2">
    <location>
        <begin position="139"/>
        <end position="159"/>
    </location>
</feature>
<feature type="transmembrane region" description="Helical" evidence="2">
    <location>
        <begin position="161"/>
        <end position="181"/>
    </location>
</feature>
<feature type="transmembrane region" description="Helical" evidence="2">
    <location>
        <begin position="211"/>
        <end position="231"/>
    </location>
</feature>
<feature type="transmembrane region" description="Helical" evidence="2">
    <location>
        <begin position="246"/>
        <end position="266"/>
    </location>
</feature>
<feature type="transmembrane region" description="Helical" evidence="2">
    <location>
        <begin position="268"/>
        <end position="288"/>
    </location>
</feature>
<feature type="transmembrane region" description="Helical" evidence="2">
    <location>
        <begin position="294"/>
        <end position="314"/>
    </location>
</feature>
<feature type="transmembrane region" description="Helical" evidence="2">
    <location>
        <begin position="331"/>
        <end position="351"/>
    </location>
</feature>
<feature type="transmembrane region" description="Helical" evidence="2">
    <location>
        <begin position="353"/>
        <end position="373"/>
    </location>
</feature>